<gene>
    <name evidence="1" type="primary">thiG</name>
    <name type="ordered locus">ABSDF1261</name>
</gene>
<name>THIG_ACIBS</name>
<proteinExistence type="inferred from homology"/>
<sequence>MQDTPLIIGSRSFQSRLLVGTGKYKDLNETDLAIQASGAEIVTVAIRRVNIGQNPDQPNLLSVIPPEKYTILPNTAGCFDADSAVRTCMLARALLDGHNLVKLEVLGDEKTLYPNVTETLKAARTLIDDGFEIMVYTSDDPIIAQELESMGCVAIMPLGSLIGSGLGILNPHTISIIKENAKVPVLVDAGVGTASDAAIAMELGCDGVLMNTAIAAAQNPILMASAMKKAVEAGREAFLAGRMPRKRMANASSPETGYFFK</sequence>
<comment type="function">
    <text evidence="1">Catalyzes the rearrangement of 1-deoxy-D-xylulose 5-phosphate (DXP) to produce the thiazole phosphate moiety of thiamine. Sulfur is provided by the thiocarboxylate moiety of the carrier protein ThiS. In vitro, sulfur can be provided by H(2)S.</text>
</comment>
<comment type="catalytic activity">
    <reaction evidence="1">
        <text>[ThiS sulfur-carrier protein]-C-terminal-Gly-aminoethanethioate + 2-iminoacetate + 1-deoxy-D-xylulose 5-phosphate = [ThiS sulfur-carrier protein]-C-terminal Gly-Gly + 2-[(2R,5Z)-2-carboxy-4-methylthiazol-5(2H)-ylidene]ethyl phosphate + 2 H2O + H(+)</text>
        <dbReference type="Rhea" id="RHEA:26297"/>
        <dbReference type="Rhea" id="RHEA-COMP:12909"/>
        <dbReference type="Rhea" id="RHEA-COMP:19908"/>
        <dbReference type="ChEBI" id="CHEBI:15377"/>
        <dbReference type="ChEBI" id="CHEBI:15378"/>
        <dbReference type="ChEBI" id="CHEBI:57792"/>
        <dbReference type="ChEBI" id="CHEBI:62899"/>
        <dbReference type="ChEBI" id="CHEBI:77846"/>
        <dbReference type="ChEBI" id="CHEBI:90778"/>
        <dbReference type="ChEBI" id="CHEBI:232372"/>
        <dbReference type="EC" id="2.8.1.10"/>
    </reaction>
</comment>
<comment type="pathway">
    <text evidence="1">Cofactor biosynthesis; thiamine diphosphate biosynthesis.</text>
</comment>
<comment type="subunit">
    <text evidence="1">Homotetramer. Forms heterodimers with either ThiH or ThiS.</text>
</comment>
<comment type="subcellular location">
    <subcellularLocation>
        <location evidence="1">Cytoplasm</location>
    </subcellularLocation>
</comment>
<comment type="similarity">
    <text evidence="1">Belongs to the ThiG family.</text>
</comment>
<evidence type="ECO:0000255" key="1">
    <source>
        <dbReference type="HAMAP-Rule" id="MF_00443"/>
    </source>
</evidence>
<reference key="1">
    <citation type="journal article" date="2008" name="PLoS ONE">
        <title>Comparative analysis of Acinetobacters: three genomes for three lifestyles.</title>
        <authorList>
            <person name="Vallenet D."/>
            <person name="Nordmann P."/>
            <person name="Barbe V."/>
            <person name="Poirel L."/>
            <person name="Mangenot S."/>
            <person name="Bataille E."/>
            <person name="Dossat C."/>
            <person name="Gas S."/>
            <person name="Kreimeyer A."/>
            <person name="Lenoble P."/>
            <person name="Oztas S."/>
            <person name="Poulain J."/>
            <person name="Segurens B."/>
            <person name="Robert C."/>
            <person name="Abergel C."/>
            <person name="Claverie J.-M."/>
            <person name="Raoult D."/>
            <person name="Medigue C."/>
            <person name="Weissenbach J."/>
            <person name="Cruveiller S."/>
        </authorList>
    </citation>
    <scope>NUCLEOTIDE SEQUENCE [LARGE SCALE GENOMIC DNA]</scope>
    <source>
        <strain>SDF</strain>
    </source>
</reference>
<feature type="chain" id="PRO_1000124591" description="Thiazole synthase">
    <location>
        <begin position="1"/>
        <end position="261"/>
    </location>
</feature>
<feature type="active site" description="Schiff-base intermediate with DXP" evidence="1">
    <location>
        <position position="102"/>
    </location>
</feature>
<feature type="binding site" evidence="1">
    <location>
        <position position="163"/>
    </location>
    <ligand>
        <name>1-deoxy-D-xylulose 5-phosphate</name>
        <dbReference type="ChEBI" id="CHEBI:57792"/>
    </ligand>
</feature>
<feature type="binding site" evidence="1">
    <location>
        <begin position="189"/>
        <end position="190"/>
    </location>
    <ligand>
        <name>1-deoxy-D-xylulose 5-phosphate</name>
        <dbReference type="ChEBI" id="CHEBI:57792"/>
    </ligand>
</feature>
<feature type="binding site" evidence="1">
    <location>
        <begin position="211"/>
        <end position="212"/>
    </location>
    <ligand>
        <name>1-deoxy-D-xylulose 5-phosphate</name>
        <dbReference type="ChEBI" id="CHEBI:57792"/>
    </ligand>
</feature>
<keyword id="KW-0963">Cytoplasm</keyword>
<keyword id="KW-0704">Schiff base</keyword>
<keyword id="KW-0784">Thiamine biosynthesis</keyword>
<keyword id="KW-0808">Transferase</keyword>
<dbReference type="EC" id="2.8.1.10" evidence="1"/>
<dbReference type="EMBL" id="CU468230">
    <property type="protein sequence ID" value="CAP00607.1"/>
    <property type="molecule type" value="Genomic_DNA"/>
</dbReference>
<dbReference type="SMR" id="B0VKA4"/>
<dbReference type="KEGG" id="abm:ABSDF1261"/>
<dbReference type="HOGENOM" id="CLU_062233_1_1_6"/>
<dbReference type="UniPathway" id="UPA00060"/>
<dbReference type="Proteomes" id="UP000001741">
    <property type="component" value="Chromosome"/>
</dbReference>
<dbReference type="GO" id="GO:0005737">
    <property type="term" value="C:cytoplasm"/>
    <property type="evidence" value="ECO:0007669"/>
    <property type="project" value="UniProtKB-SubCell"/>
</dbReference>
<dbReference type="GO" id="GO:1990107">
    <property type="term" value="F:thiazole synthase activity"/>
    <property type="evidence" value="ECO:0007669"/>
    <property type="project" value="UniProtKB-EC"/>
</dbReference>
<dbReference type="GO" id="GO:0009229">
    <property type="term" value="P:thiamine diphosphate biosynthetic process"/>
    <property type="evidence" value="ECO:0007669"/>
    <property type="project" value="UniProtKB-UniRule"/>
</dbReference>
<dbReference type="CDD" id="cd04728">
    <property type="entry name" value="ThiG"/>
    <property type="match status" value="1"/>
</dbReference>
<dbReference type="Gene3D" id="3.20.20.70">
    <property type="entry name" value="Aldolase class I"/>
    <property type="match status" value="1"/>
</dbReference>
<dbReference type="HAMAP" id="MF_00443">
    <property type="entry name" value="ThiG"/>
    <property type="match status" value="1"/>
</dbReference>
<dbReference type="InterPro" id="IPR013785">
    <property type="entry name" value="Aldolase_TIM"/>
</dbReference>
<dbReference type="InterPro" id="IPR033983">
    <property type="entry name" value="Thiazole_synthase_ThiG"/>
</dbReference>
<dbReference type="InterPro" id="IPR008867">
    <property type="entry name" value="ThiG"/>
</dbReference>
<dbReference type="PANTHER" id="PTHR34266">
    <property type="entry name" value="THIAZOLE SYNTHASE"/>
    <property type="match status" value="1"/>
</dbReference>
<dbReference type="PANTHER" id="PTHR34266:SF2">
    <property type="entry name" value="THIAZOLE SYNTHASE"/>
    <property type="match status" value="1"/>
</dbReference>
<dbReference type="Pfam" id="PF05690">
    <property type="entry name" value="ThiG"/>
    <property type="match status" value="1"/>
</dbReference>
<dbReference type="SUPFAM" id="SSF110399">
    <property type="entry name" value="ThiG-like"/>
    <property type="match status" value="1"/>
</dbReference>
<accession>B0VKA4</accession>
<organism>
    <name type="scientific">Acinetobacter baumannii (strain SDF)</name>
    <dbReference type="NCBI Taxonomy" id="509170"/>
    <lineage>
        <taxon>Bacteria</taxon>
        <taxon>Pseudomonadati</taxon>
        <taxon>Pseudomonadota</taxon>
        <taxon>Gammaproteobacteria</taxon>
        <taxon>Moraxellales</taxon>
        <taxon>Moraxellaceae</taxon>
        <taxon>Acinetobacter</taxon>
        <taxon>Acinetobacter calcoaceticus/baumannii complex</taxon>
    </lineage>
</organism>
<protein>
    <recommendedName>
        <fullName evidence="1">Thiazole synthase</fullName>
        <ecNumber evidence="1">2.8.1.10</ecNumber>
    </recommendedName>
</protein>